<feature type="chain" id="PRO_0000355592" description="Keratin-associated protein 12-2">
    <location>
        <begin position="1"/>
        <end position="124"/>
    </location>
</feature>
<feature type="repeat" description="1" evidence="2">
    <location>
        <begin position="10"/>
        <end position="13"/>
    </location>
</feature>
<feature type="repeat" description="2" evidence="2">
    <location>
        <begin position="14"/>
        <end position="18"/>
    </location>
</feature>
<feature type="repeat" description="3" evidence="2">
    <location>
        <begin position="19"/>
        <end position="23"/>
    </location>
</feature>
<feature type="repeat" description="4" evidence="2">
    <location>
        <begin position="24"/>
        <end position="28"/>
    </location>
</feature>
<feature type="repeat" description="5" evidence="2">
    <location>
        <begin position="33"/>
        <end position="38"/>
    </location>
</feature>
<feature type="repeat" description="6" evidence="2">
    <location>
        <begin position="39"/>
        <end position="43"/>
    </location>
</feature>
<feature type="repeat" description="7" evidence="2">
    <location>
        <begin position="44"/>
        <end position="48"/>
    </location>
</feature>
<feature type="repeat" description="8" evidence="2">
    <location>
        <begin position="49"/>
        <end position="52"/>
    </location>
</feature>
<feature type="repeat" description="9" evidence="2">
    <location>
        <begin position="53"/>
        <end position="57"/>
    </location>
</feature>
<feature type="repeat" description="10" evidence="2">
    <location>
        <begin position="58"/>
        <end position="62"/>
    </location>
</feature>
<feature type="repeat" description="11" evidence="2">
    <location>
        <begin position="63"/>
        <end position="67"/>
    </location>
</feature>
<feature type="repeat" description="12" evidence="2">
    <location>
        <begin position="68"/>
        <end position="72"/>
    </location>
</feature>
<feature type="repeat" description="13" evidence="2">
    <location>
        <begin position="73"/>
        <end position="77"/>
    </location>
</feature>
<feature type="repeat" description="14" evidence="2">
    <location>
        <begin position="78"/>
        <end position="82"/>
    </location>
</feature>
<feature type="repeat" description="15" evidence="2">
    <location>
        <begin position="83"/>
        <end position="87"/>
    </location>
</feature>
<feature type="repeat" description="16" evidence="2">
    <location>
        <begin position="88"/>
        <end position="92"/>
    </location>
</feature>
<feature type="repeat" description="17" evidence="2">
    <location>
        <begin position="98"/>
        <end position="102"/>
    </location>
</feature>
<feature type="repeat" description="18" evidence="2">
    <location>
        <begin position="103"/>
        <end position="107"/>
    </location>
</feature>
<feature type="repeat" description="19" evidence="2">
    <location>
        <begin position="108"/>
        <end position="112"/>
    </location>
</feature>
<feature type="repeat" description="20" evidence="2">
    <location>
        <begin position="113"/>
        <end position="117"/>
    </location>
</feature>
<feature type="region of interest" description="20 X 5 AA approximate repeats" evidence="2">
    <location>
        <begin position="10"/>
        <end position="117"/>
    </location>
</feature>
<gene>
    <name evidence="3" type="primary">KRTAP12-2</name>
</gene>
<evidence type="ECO:0000250" key="1">
    <source>
        <dbReference type="UniProtKB" id="P59991"/>
    </source>
</evidence>
<evidence type="ECO:0000255" key="2"/>
<evidence type="ECO:0000312" key="3">
    <source>
        <dbReference type="EMBL" id="AAI22854.1"/>
    </source>
</evidence>
<comment type="function">
    <text evidence="1">In the hair cortex, hair keratin intermediate filaments are embedded in an interfilamentous matrix, consisting of hair keratin-associated proteins (KRTAP), which are essential for the formation of a rigid and resistant hair shaft through their extensive disulfide bond cross-linking with abundant cysteine residues of hair keratins. The matrix proteins include the high-sulfur and high-glycine-tyrosine keratins (By similarity).</text>
</comment>
<comment type="subunit">
    <text evidence="1">Interacts with hair keratins.</text>
</comment>
<comment type="similarity">
    <text evidence="2">Belongs to the KRTAP type 12 family.</text>
</comment>
<protein>
    <recommendedName>
        <fullName evidence="1 3">Keratin-associated protein 12-2</fullName>
    </recommendedName>
</protein>
<accession>Q05B44</accession>
<sequence>MCHTSCSSGCQAACVPSSCQPSCSTSSPCHTSCFTSSLCQPTCSTSSTCQATCVPVSYRPAVCLPVTYKPTLCVTPSCQSSVFLPVSYRPAVYVAPSCQSSGCYQPSCPTLVYRPISCSTSSCF</sequence>
<name>KR122_BOVIN</name>
<keyword id="KW-0416">Keratin</keyword>
<keyword id="KW-1185">Reference proteome</keyword>
<keyword id="KW-0677">Repeat</keyword>
<proteinExistence type="evidence at transcript level"/>
<dbReference type="EMBL" id="BC122853">
    <property type="protein sequence ID" value="AAI22854.1"/>
    <property type="molecule type" value="mRNA"/>
</dbReference>
<dbReference type="RefSeq" id="NP_001073820.1">
    <property type="nucleotide sequence ID" value="NM_001080351.1"/>
</dbReference>
<dbReference type="STRING" id="9913.ENSBTAP00000024766"/>
<dbReference type="PaxDb" id="9913-ENSBTAP00000024766"/>
<dbReference type="Ensembl" id="ENSBTAT00000024766.5">
    <property type="protein sequence ID" value="ENSBTAP00000024766.4"/>
    <property type="gene ID" value="ENSBTAG00000018610.5"/>
</dbReference>
<dbReference type="GeneID" id="783717"/>
<dbReference type="KEGG" id="bta:783717"/>
<dbReference type="CTD" id="353323"/>
<dbReference type="VEuPathDB" id="HostDB:ENSBTAG00000018610"/>
<dbReference type="eggNOG" id="KOG4726">
    <property type="taxonomic scope" value="Eukaryota"/>
</dbReference>
<dbReference type="GeneTree" id="ENSGT00940000161526"/>
<dbReference type="HOGENOM" id="CLU_138013_0_0_1"/>
<dbReference type="InParanoid" id="Q05B44"/>
<dbReference type="OMA" id="PVRCQSS"/>
<dbReference type="OrthoDB" id="9711327at2759"/>
<dbReference type="TreeFam" id="TF339135"/>
<dbReference type="Reactome" id="R-BTA-6805567">
    <property type="pathway name" value="Keratinization"/>
</dbReference>
<dbReference type="Proteomes" id="UP000009136">
    <property type="component" value="Chromosome 1"/>
</dbReference>
<dbReference type="Bgee" id="ENSBTAG00000018610">
    <property type="expression patterns" value="Expressed in zone of skin and 11 other cell types or tissues"/>
</dbReference>
<dbReference type="GO" id="GO:0005829">
    <property type="term" value="C:cytosol"/>
    <property type="evidence" value="ECO:0007669"/>
    <property type="project" value="UniProtKB-ARBA"/>
</dbReference>
<dbReference type="GO" id="GO:0045095">
    <property type="term" value="C:keratin filament"/>
    <property type="evidence" value="ECO:0007669"/>
    <property type="project" value="InterPro"/>
</dbReference>
<dbReference type="InterPro" id="IPR002494">
    <property type="entry name" value="KAP"/>
</dbReference>
<dbReference type="Pfam" id="PF13885">
    <property type="entry name" value="Keratin_B2_2"/>
    <property type="match status" value="1"/>
</dbReference>
<organism>
    <name type="scientific">Bos taurus</name>
    <name type="common">Bovine</name>
    <dbReference type="NCBI Taxonomy" id="9913"/>
    <lineage>
        <taxon>Eukaryota</taxon>
        <taxon>Metazoa</taxon>
        <taxon>Chordata</taxon>
        <taxon>Craniata</taxon>
        <taxon>Vertebrata</taxon>
        <taxon>Euteleostomi</taxon>
        <taxon>Mammalia</taxon>
        <taxon>Eutheria</taxon>
        <taxon>Laurasiatheria</taxon>
        <taxon>Artiodactyla</taxon>
        <taxon>Ruminantia</taxon>
        <taxon>Pecora</taxon>
        <taxon>Bovidae</taxon>
        <taxon>Bovinae</taxon>
        <taxon>Bos</taxon>
    </lineage>
</organism>
<reference evidence="3" key="1">
    <citation type="submission" date="2006-08" db="EMBL/GenBank/DDBJ databases">
        <authorList>
            <consortium name="NIH - Mammalian Gene Collection (MGC) project"/>
        </authorList>
    </citation>
    <scope>NUCLEOTIDE SEQUENCE [LARGE SCALE MRNA]</scope>
    <source>
        <strain evidence="3">Hereford</strain>
        <tissue evidence="3">Fetal skin</tissue>
    </source>
</reference>